<proteinExistence type="evidence at protein level"/>
<reference key="1">
    <citation type="journal article" date="1975" name="Biochim. Biophys. Acta">
        <title>The amino acid sequence of phospholipase A, fractions DE-I and DE-II.</title>
        <authorList>
            <person name="Joubert F.J."/>
        </authorList>
    </citation>
    <scope>PROTEIN SEQUENCE</scope>
    <source>
        <tissue>Venom</tissue>
    </source>
</reference>
<protein>
    <recommendedName>
        <fullName>Acidic phospholipase A2 DE-II</fullName>
        <shortName>svPLA2</shortName>
        <ecNumber>3.1.1.4</ecNumber>
    </recommendedName>
    <alternativeName>
        <fullName>Phosphatidylcholine 2-acylhydrolase</fullName>
    </alternativeName>
</protein>
<comment type="function">
    <text>PLA2 catalyzes the calcium-dependent hydrolysis of the 2-acyl groups in 3-sn-phosphoglycerides.</text>
</comment>
<comment type="catalytic activity">
    <reaction evidence="2 3">
        <text>a 1,2-diacyl-sn-glycero-3-phosphocholine + H2O = a 1-acyl-sn-glycero-3-phosphocholine + a fatty acid + H(+)</text>
        <dbReference type="Rhea" id="RHEA:15801"/>
        <dbReference type="ChEBI" id="CHEBI:15377"/>
        <dbReference type="ChEBI" id="CHEBI:15378"/>
        <dbReference type="ChEBI" id="CHEBI:28868"/>
        <dbReference type="ChEBI" id="CHEBI:57643"/>
        <dbReference type="ChEBI" id="CHEBI:58168"/>
        <dbReference type="EC" id="3.1.1.4"/>
    </reaction>
</comment>
<comment type="cofactor">
    <cofactor evidence="1">
        <name>Ca(2+)</name>
        <dbReference type="ChEBI" id="CHEBI:29108"/>
    </cofactor>
    <text evidence="1">Binds 1 Ca(2+) ion.</text>
</comment>
<comment type="subcellular location">
    <subcellularLocation>
        <location>Secreted</location>
    </subcellularLocation>
</comment>
<comment type="tissue specificity">
    <text>Expressed by the venom gland.</text>
</comment>
<comment type="similarity">
    <text evidence="4">Belongs to the phospholipase A2 family. Group I subfamily. D49 sub-subfamily.</text>
</comment>
<accession>P00600</accession>
<feature type="chain" id="PRO_0000161664" description="Acidic phospholipase A2 DE-II">
    <location>
        <begin position="1"/>
        <end position="119"/>
    </location>
</feature>
<feature type="active site" evidence="1">
    <location>
        <position position="47"/>
    </location>
</feature>
<feature type="active site" evidence="1">
    <location>
        <position position="93"/>
    </location>
</feature>
<feature type="binding site" evidence="1">
    <location>
        <position position="27"/>
    </location>
    <ligand>
        <name>Ca(2+)</name>
        <dbReference type="ChEBI" id="CHEBI:29108"/>
    </ligand>
</feature>
<feature type="binding site" evidence="1">
    <location>
        <position position="29"/>
    </location>
    <ligand>
        <name>Ca(2+)</name>
        <dbReference type="ChEBI" id="CHEBI:29108"/>
    </ligand>
</feature>
<feature type="binding site" evidence="1">
    <location>
        <position position="31"/>
    </location>
    <ligand>
        <name>Ca(2+)</name>
        <dbReference type="ChEBI" id="CHEBI:29108"/>
    </ligand>
</feature>
<feature type="binding site" evidence="1">
    <location>
        <position position="48"/>
    </location>
    <ligand>
        <name>Ca(2+)</name>
        <dbReference type="ChEBI" id="CHEBI:29108"/>
    </ligand>
</feature>
<feature type="disulfide bond" evidence="1">
    <location>
        <begin position="11"/>
        <end position="72"/>
    </location>
</feature>
<feature type="disulfide bond" evidence="1">
    <location>
        <begin position="26"/>
        <end position="118"/>
    </location>
</feature>
<feature type="disulfide bond" evidence="1">
    <location>
        <begin position="28"/>
        <end position="44"/>
    </location>
</feature>
<feature type="disulfide bond" evidence="1">
    <location>
        <begin position="43"/>
        <end position="99"/>
    </location>
</feature>
<feature type="disulfide bond" evidence="1">
    <location>
        <begin position="50"/>
        <end position="92"/>
    </location>
</feature>
<feature type="disulfide bond" evidence="1">
    <location>
        <begin position="60"/>
        <end position="85"/>
    </location>
</feature>
<feature type="disulfide bond" evidence="1">
    <location>
        <begin position="79"/>
        <end position="90"/>
    </location>
</feature>
<feature type="sequence variant">
    <original>T</original>
    <variation>P</variation>
    <location>
        <position position="104"/>
    </location>
</feature>
<feature type="sequence variant">
    <original>N</original>
    <variation>I</variation>
    <location>
        <position position="106"/>
    </location>
</feature>
<keyword id="KW-0106">Calcium</keyword>
<keyword id="KW-0903">Direct protein sequencing</keyword>
<keyword id="KW-1015">Disulfide bond</keyword>
<keyword id="KW-0378">Hydrolase</keyword>
<keyword id="KW-0442">Lipid degradation</keyword>
<keyword id="KW-0443">Lipid metabolism</keyword>
<keyword id="KW-0479">Metal-binding</keyword>
<keyword id="KW-0964">Secreted</keyword>
<name>PA2A2_NAJME</name>
<organism>
    <name type="scientific">Naja melanoleuca</name>
    <name type="common">Forest cobra</name>
    <name type="synonym">Black-lipped cobra</name>
    <dbReference type="NCBI Taxonomy" id="8643"/>
    <lineage>
        <taxon>Eukaryota</taxon>
        <taxon>Metazoa</taxon>
        <taxon>Chordata</taxon>
        <taxon>Craniata</taxon>
        <taxon>Vertebrata</taxon>
        <taxon>Euteleostomi</taxon>
        <taxon>Lepidosauria</taxon>
        <taxon>Squamata</taxon>
        <taxon>Bifurcata</taxon>
        <taxon>Unidentata</taxon>
        <taxon>Episquamata</taxon>
        <taxon>Toxicofera</taxon>
        <taxon>Serpentes</taxon>
        <taxon>Colubroidea</taxon>
        <taxon>Elapidae</taxon>
        <taxon>Elapinae</taxon>
        <taxon>Naja</taxon>
    </lineage>
</organism>
<dbReference type="EC" id="3.1.1.4"/>
<dbReference type="PIR" id="A90601">
    <property type="entry name" value="PSNJ2W"/>
</dbReference>
<dbReference type="SMR" id="P00600"/>
<dbReference type="GO" id="GO:0005576">
    <property type="term" value="C:extracellular region"/>
    <property type="evidence" value="ECO:0007669"/>
    <property type="project" value="UniProtKB-SubCell"/>
</dbReference>
<dbReference type="GO" id="GO:0005509">
    <property type="term" value="F:calcium ion binding"/>
    <property type="evidence" value="ECO:0007669"/>
    <property type="project" value="InterPro"/>
</dbReference>
<dbReference type="GO" id="GO:0047498">
    <property type="term" value="F:calcium-dependent phospholipase A2 activity"/>
    <property type="evidence" value="ECO:0007669"/>
    <property type="project" value="TreeGrafter"/>
</dbReference>
<dbReference type="GO" id="GO:0005543">
    <property type="term" value="F:phospholipid binding"/>
    <property type="evidence" value="ECO:0007669"/>
    <property type="project" value="TreeGrafter"/>
</dbReference>
<dbReference type="GO" id="GO:0050482">
    <property type="term" value="P:arachidonate secretion"/>
    <property type="evidence" value="ECO:0007669"/>
    <property type="project" value="InterPro"/>
</dbReference>
<dbReference type="GO" id="GO:0016042">
    <property type="term" value="P:lipid catabolic process"/>
    <property type="evidence" value="ECO:0007669"/>
    <property type="project" value="UniProtKB-KW"/>
</dbReference>
<dbReference type="GO" id="GO:0006644">
    <property type="term" value="P:phospholipid metabolic process"/>
    <property type="evidence" value="ECO:0007669"/>
    <property type="project" value="InterPro"/>
</dbReference>
<dbReference type="CDD" id="cd00125">
    <property type="entry name" value="PLA2c"/>
    <property type="match status" value="1"/>
</dbReference>
<dbReference type="FunFam" id="1.20.90.10:FF:000007">
    <property type="entry name" value="Acidic phospholipase A2"/>
    <property type="match status" value="1"/>
</dbReference>
<dbReference type="Gene3D" id="1.20.90.10">
    <property type="entry name" value="Phospholipase A2 domain"/>
    <property type="match status" value="1"/>
</dbReference>
<dbReference type="InterPro" id="IPR001211">
    <property type="entry name" value="PLipase_A2"/>
</dbReference>
<dbReference type="InterPro" id="IPR033112">
    <property type="entry name" value="PLipase_A2_Asp_AS"/>
</dbReference>
<dbReference type="InterPro" id="IPR016090">
    <property type="entry name" value="PLipase_A2_dom"/>
</dbReference>
<dbReference type="InterPro" id="IPR036444">
    <property type="entry name" value="PLipase_A2_dom_sf"/>
</dbReference>
<dbReference type="InterPro" id="IPR033113">
    <property type="entry name" value="PLipase_A2_His_AS"/>
</dbReference>
<dbReference type="PANTHER" id="PTHR11716:SF106">
    <property type="entry name" value="PHOSPHOLIPASE A2 A2-ACTITOXIN-UCS2A-LIKE"/>
    <property type="match status" value="1"/>
</dbReference>
<dbReference type="PANTHER" id="PTHR11716">
    <property type="entry name" value="PHOSPHOLIPASE A2 FAMILY MEMBER"/>
    <property type="match status" value="1"/>
</dbReference>
<dbReference type="Pfam" id="PF00068">
    <property type="entry name" value="Phospholip_A2_1"/>
    <property type="match status" value="1"/>
</dbReference>
<dbReference type="PRINTS" id="PR00389">
    <property type="entry name" value="PHPHLIPASEA2"/>
</dbReference>
<dbReference type="SMART" id="SM00085">
    <property type="entry name" value="PA2c"/>
    <property type="match status" value="1"/>
</dbReference>
<dbReference type="SUPFAM" id="SSF48619">
    <property type="entry name" value="Phospholipase A2, PLA2"/>
    <property type="match status" value="1"/>
</dbReference>
<dbReference type="PROSITE" id="PS00119">
    <property type="entry name" value="PA2_ASP"/>
    <property type="match status" value="1"/>
</dbReference>
<dbReference type="PROSITE" id="PS00118">
    <property type="entry name" value="PA2_HIS"/>
    <property type="match status" value="1"/>
</dbReference>
<evidence type="ECO:0000250" key="1"/>
<evidence type="ECO:0000255" key="2">
    <source>
        <dbReference type="PROSITE-ProRule" id="PRU10035"/>
    </source>
</evidence>
<evidence type="ECO:0000255" key="3">
    <source>
        <dbReference type="PROSITE-ProRule" id="PRU10036"/>
    </source>
</evidence>
<evidence type="ECO:0000305" key="4"/>
<sequence length="119" mass="13427">NLYQFKNMIQCTVPNRSWWHFANYGCYCGRGGSGTPVDDLDRCCQIHDNCYGEAEKISGCWPYIKTYTYESCQGTLTSCGANNKCAASVCDCDRVAANCFARATYNDKNYNIDFNARCQ</sequence>